<gene>
    <name type="ordered locus">CJJ81176_0395</name>
</gene>
<sequence length="201" mass="20698">MKKIKKIIQIGMIGGLAAVAGGALAGCGSNNDNADTLNQAANAQGAFVIIEETAPGQYKIKDQYPSDETRVVLKDLNGTERILSKEEMDALIKEEAAKIDNGTSNLTKDNGQISSGGLSLGETLLASAAGAILGSWIGSKLFNNQNFANQQRGAFSNQSAYQRSVNSFNKAGTTSSASSAKKSGFFGGGSKATSSSSSFGS</sequence>
<comment type="subcellular location">
    <subcellularLocation>
        <location evidence="1">Cell membrane</location>
        <topology evidence="1">Lipid-anchor</topology>
    </subcellularLocation>
</comment>
<comment type="similarity">
    <text evidence="1">Belongs to the UPF0323 family.</text>
</comment>
<protein>
    <recommendedName>
        <fullName evidence="1">UPF0323 lipoprotein CJJ81176_0395</fullName>
    </recommendedName>
</protein>
<reference key="1">
    <citation type="submission" date="2006-12" db="EMBL/GenBank/DDBJ databases">
        <authorList>
            <person name="Fouts D.E."/>
            <person name="Nelson K.E."/>
            <person name="Sebastian Y."/>
        </authorList>
    </citation>
    <scope>NUCLEOTIDE SEQUENCE [LARGE SCALE GENOMIC DNA]</scope>
    <source>
        <strain>81-176</strain>
    </source>
</reference>
<organism>
    <name type="scientific">Campylobacter jejuni subsp. jejuni serotype O:23/36 (strain 81-176)</name>
    <dbReference type="NCBI Taxonomy" id="354242"/>
    <lineage>
        <taxon>Bacteria</taxon>
        <taxon>Pseudomonadati</taxon>
        <taxon>Campylobacterota</taxon>
        <taxon>Epsilonproteobacteria</taxon>
        <taxon>Campylobacterales</taxon>
        <taxon>Campylobacteraceae</taxon>
        <taxon>Campylobacter</taxon>
    </lineage>
</organism>
<evidence type="ECO:0000255" key="1">
    <source>
        <dbReference type="HAMAP-Rule" id="MF_01421"/>
    </source>
</evidence>
<evidence type="ECO:0000256" key="2">
    <source>
        <dbReference type="SAM" id="MobiDB-lite"/>
    </source>
</evidence>
<accession>A1VY92</accession>
<feature type="signal peptide" evidence="1">
    <location>
        <begin position="1"/>
        <end position="26"/>
    </location>
</feature>
<feature type="chain" id="PRO_1000024296" description="UPF0323 lipoprotein CJJ81176_0395">
    <location>
        <begin position="27"/>
        <end position="201"/>
    </location>
</feature>
<feature type="region of interest" description="Disordered" evidence="2">
    <location>
        <begin position="169"/>
        <end position="201"/>
    </location>
</feature>
<feature type="compositionally biased region" description="Low complexity" evidence="2">
    <location>
        <begin position="170"/>
        <end position="184"/>
    </location>
</feature>
<feature type="compositionally biased region" description="Low complexity" evidence="2">
    <location>
        <begin position="191"/>
        <end position="201"/>
    </location>
</feature>
<feature type="lipid moiety-binding region" description="N-palmitoyl cysteine" evidence="1">
    <location>
        <position position="27"/>
    </location>
</feature>
<feature type="lipid moiety-binding region" description="S-diacylglycerol cysteine" evidence="1">
    <location>
        <position position="27"/>
    </location>
</feature>
<name>Y395_CAMJJ</name>
<proteinExistence type="inferred from homology"/>
<dbReference type="EMBL" id="CP000538">
    <property type="protein sequence ID" value="EAQ73335.1"/>
    <property type="molecule type" value="Genomic_DNA"/>
</dbReference>
<dbReference type="RefSeq" id="WP_002854351.1">
    <property type="nucleotide sequence ID" value="NC_008787.1"/>
</dbReference>
<dbReference type="KEGG" id="cjj:CJJ81176_0395"/>
<dbReference type="eggNOG" id="ENOG502ZIB8">
    <property type="taxonomic scope" value="Bacteria"/>
</dbReference>
<dbReference type="HOGENOM" id="CLU_111520_0_0_7"/>
<dbReference type="Proteomes" id="UP000000646">
    <property type="component" value="Chromosome"/>
</dbReference>
<dbReference type="GO" id="GO:0005886">
    <property type="term" value="C:plasma membrane"/>
    <property type="evidence" value="ECO:0007669"/>
    <property type="project" value="UniProtKB-SubCell"/>
</dbReference>
<dbReference type="HAMAP" id="MF_01421">
    <property type="entry name" value="UPF0323"/>
    <property type="match status" value="1"/>
</dbReference>
<dbReference type="InterPro" id="IPR020913">
    <property type="entry name" value="UPF0323"/>
</dbReference>
<dbReference type="NCBIfam" id="NF003146">
    <property type="entry name" value="PRK04081.1"/>
    <property type="match status" value="1"/>
</dbReference>
<dbReference type="PROSITE" id="PS51257">
    <property type="entry name" value="PROKAR_LIPOPROTEIN"/>
    <property type="match status" value="1"/>
</dbReference>
<keyword id="KW-1003">Cell membrane</keyword>
<keyword id="KW-0449">Lipoprotein</keyword>
<keyword id="KW-0472">Membrane</keyword>
<keyword id="KW-0564">Palmitate</keyword>
<keyword id="KW-0732">Signal</keyword>